<protein>
    <recommendedName>
        <fullName>Cytochrome b</fullName>
    </recommendedName>
    <alternativeName>
        <fullName>Complex III subunit 3</fullName>
    </alternativeName>
    <alternativeName>
        <fullName>Complex III subunit III</fullName>
    </alternativeName>
    <alternativeName>
        <fullName>Cytochrome b-c1 complex subunit 3</fullName>
    </alternativeName>
    <alternativeName>
        <fullName>Ubiquinol-cytochrome-c reductase complex cytochrome b subunit</fullName>
    </alternativeName>
</protein>
<gene>
    <name type="primary">MT-CYB</name>
    <name type="synonym">COB</name>
    <name type="synonym">CYTB</name>
    <name type="synonym">MTCYB</name>
</gene>
<dbReference type="EMBL" id="AY513798">
    <property type="protein sequence ID" value="AAS82790.1"/>
    <property type="molecule type" value="Genomic_DNA"/>
</dbReference>
<dbReference type="SMR" id="Q6JDT8"/>
<dbReference type="GO" id="GO:0005743">
    <property type="term" value="C:mitochondrial inner membrane"/>
    <property type="evidence" value="ECO:0007669"/>
    <property type="project" value="UniProtKB-SubCell"/>
</dbReference>
<dbReference type="GO" id="GO:0045275">
    <property type="term" value="C:respiratory chain complex III"/>
    <property type="evidence" value="ECO:0007669"/>
    <property type="project" value="InterPro"/>
</dbReference>
<dbReference type="GO" id="GO:0046872">
    <property type="term" value="F:metal ion binding"/>
    <property type="evidence" value="ECO:0007669"/>
    <property type="project" value="UniProtKB-KW"/>
</dbReference>
<dbReference type="GO" id="GO:0008121">
    <property type="term" value="F:ubiquinol-cytochrome-c reductase activity"/>
    <property type="evidence" value="ECO:0007669"/>
    <property type="project" value="InterPro"/>
</dbReference>
<dbReference type="GO" id="GO:0006122">
    <property type="term" value="P:mitochondrial electron transport, ubiquinol to cytochrome c"/>
    <property type="evidence" value="ECO:0007669"/>
    <property type="project" value="TreeGrafter"/>
</dbReference>
<dbReference type="CDD" id="cd00290">
    <property type="entry name" value="cytochrome_b_C"/>
    <property type="match status" value="1"/>
</dbReference>
<dbReference type="CDD" id="cd00284">
    <property type="entry name" value="Cytochrome_b_N"/>
    <property type="match status" value="1"/>
</dbReference>
<dbReference type="FunFam" id="1.20.810.10:FF:000002">
    <property type="entry name" value="Cytochrome b"/>
    <property type="match status" value="1"/>
</dbReference>
<dbReference type="Gene3D" id="1.20.810.10">
    <property type="entry name" value="Cytochrome Bc1 Complex, Chain C"/>
    <property type="match status" value="1"/>
</dbReference>
<dbReference type="InterPro" id="IPR005798">
    <property type="entry name" value="Cyt_b/b6_C"/>
</dbReference>
<dbReference type="InterPro" id="IPR036150">
    <property type="entry name" value="Cyt_b/b6_C_sf"/>
</dbReference>
<dbReference type="InterPro" id="IPR005797">
    <property type="entry name" value="Cyt_b/b6_N"/>
</dbReference>
<dbReference type="InterPro" id="IPR027387">
    <property type="entry name" value="Cytb/b6-like_sf"/>
</dbReference>
<dbReference type="InterPro" id="IPR030689">
    <property type="entry name" value="Cytochrome_b"/>
</dbReference>
<dbReference type="InterPro" id="IPR048260">
    <property type="entry name" value="Cytochrome_b_C_euk/bac"/>
</dbReference>
<dbReference type="InterPro" id="IPR048259">
    <property type="entry name" value="Cytochrome_b_N_euk/bac"/>
</dbReference>
<dbReference type="InterPro" id="IPR016174">
    <property type="entry name" value="Di-haem_cyt_TM"/>
</dbReference>
<dbReference type="PANTHER" id="PTHR19271">
    <property type="entry name" value="CYTOCHROME B"/>
    <property type="match status" value="1"/>
</dbReference>
<dbReference type="PANTHER" id="PTHR19271:SF16">
    <property type="entry name" value="CYTOCHROME B"/>
    <property type="match status" value="1"/>
</dbReference>
<dbReference type="Pfam" id="PF00032">
    <property type="entry name" value="Cytochrom_B_C"/>
    <property type="match status" value="1"/>
</dbReference>
<dbReference type="Pfam" id="PF00033">
    <property type="entry name" value="Cytochrome_B"/>
    <property type="match status" value="1"/>
</dbReference>
<dbReference type="PIRSF" id="PIRSF038885">
    <property type="entry name" value="COB"/>
    <property type="match status" value="1"/>
</dbReference>
<dbReference type="SUPFAM" id="SSF81648">
    <property type="entry name" value="a domain/subunit of cytochrome bc1 complex (Ubiquinol-cytochrome c reductase)"/>
    <property type="match status" value="1"/>
</dbReference>
<dbReference type="SUPFAM" id="SSF81342">
    <property type="entry name" value="Transmembrane di-heme cytochromes"/>
    <property type="match status" value="1"/>
</dbReference>
<dbReference type="PROSITE" id="PS51003">
    <property type="entry name" value="CYTB_CTER"/>
    <property type="match status" value="1"/>
</dbReference>
<dbReference type="PROSITE" id="PS51002">
    <property type="entry name" value="CYTB_NTER"/>
    <property type="match status" value="1"/>
</dbReference>
<proteinExistence type="inferred from homology"/>
<keyword id="KW-0249">Electron transport</keyword>
<keyword id="KW-0349">Heme</keyword>
<keyword id="KW-0408">Iron</keyword>
<keyword id="KW-0472">Membrane</keyword>
<keyword id="KW-0479">Metal-binding</keyword>
<keyword id="KW-0496">Mitochondrion</keyword>
<keyword id="KW-0999">Mitochondrion inner membrane</keyword>
<keyword id="KW-0679">Respiratory chain</keyword>
<keyword id="KW-0812">Transmembrane</keyword>
<keyword id="KW-1133">Transmembrane helix</keyword>
<keyword id="KW-0813">Transport</keyword>
<keyword id="KW-0830">Ubiquinone</keyword>
<comment type="function">
    <text evidence="2">Component of the ubiquinol-cytochrome c reductase complex (complex III or cytochrome b-c1 complex) that is part of the mitochondrial respiratory chain. The b-c1 complex mediates electron transfer from ubiquinol to cytochrome c. Contributes to the generation of a proton gradient across the mitochondrial membrane that is then used for ATP synthesis.</text>
</comment>
<comment type="cofactor">
    <cofactor evidence="2">
        <name>heme b</name>
        <dbReference type="ChEBI" id="CHEBI:60344"/>
    </cofactor>
    <text evidence="2">Binds 2 heme b groups non-covalently.</text>
</comment>
<comment type="subunit">
    <text evidence="2">The cytochrome bc1 complex contains 11 subunits: 3 respiratory subunits (MT-CYB, CYC1 and UQCRFS1), 2 core proteins (UQCRC1 and UQCRC2) and 6 low-molecular weight proteins (UQCRH/QCR6, UQCRB/QCR7, UQCRQ/QCR8, UQCR10/QCR9, UQCR11/QCR10 and a cleavage product of UQCRFS1). This cytochrome bc1 complex then forms a dimer.</text>
</comment>
<comment type="subcellular location">
    <subcellularLocation>
        <location evidence="2">Mitochondrion inner membrane</location>
        <topology evidence="2">Multi-pass membrane protein</topology>
    </subcellularLocation>
</comment>
<comment type="miscellaneous">
    <text evidence="1">Heme 1 (or BL or b562) is low-potential and absorbs at about 562 nm, and heme 2 (or BH or b566) is high-potential and absorbs at about 566 nm.</text>
</comment>
<comment type="similarity">
    <text evidence="3 4">Belongs to the cytochrome b family.</text>
</comment>
<comment type="caution">
    <text evidence="2">The full-length protein contains only eight transmembrane helices, not nine as predicted by bioinformatics tools.</text>
</comment>
<reference key="1">
    <citation type="journal article" date="2004" name="Mol. Phylogenet. Evol.">
        <title>Molecular phylogeny of the speciose vole genus Microtus (Arvicolinae, Rodentia) inferred from mitochondrial DNA sequences.</title>
        <authorList>
            <person name="Jaarola M."/>
            <person name="Martinkova N."/>
            <person name="Gunduz I."/>
            <person name="Brunhoff C."/>
            <person name="Zima J."/>
            <person name="Nadachowski A."/>
            <person name="Amori G."/>
            <person name="Bulatova N.S."/>
            <person name="Chondropoulos B."/>
            <person name="Fraguedakis-Tsolis S."/>
            <person name="Gonzalez-Esteban J."/>
            <person name="Lopez-Fuster M.J."/>
            <person name="Kandaurov A.S."/>
            <person name="Kefelioglu H."/>
            <person name="Mathias M.L."/>
            <person name="Villate I."/>
            <person name="Searle J.B."/>
        </authorList>
    </citation>
    <scope>NUCLEOTIDE SEQUENCE [GENOMIC DNA]</scope>
</reference>
<name>CYB_MICFE</name>
<geneLocation type="mitochondrion"/>
<feature type="chain" id="PRO_0000255077" description="Cytochrome b">
    <location>
        <begin position="1"/>
        <end position="380"/>
    </location>
</feature>
<feature type="transmembrane region" description="Helical" evidence="2">
    <location>
        <begin position="33"/>
        <end position="53"/>
    </location>
</feature>
<feature type="transmembrane region" description="Helical" evidence="2">
    <location>
        <begin position="77"/>
        <end position="98"/>
    </location>
</feature>
<feature type="transmembrane region" description="Helical" evidence="2">
    <location>
        <begin position="113"/>
        <end position="133"/>
    </location>
</feature>
<feature type="transmembrane region" description="Helical" evidence="2">
    <location>
        <begin position="178"/>
        <end position="198"/>
    </location>
</feature>
<feature type="transmembrane region" description="Helical" evidence="2">
    <location>
        <begin position="226"/>
        <end position="246"/>
    </location>
</feature>
<feature type="transmembrane region" description="Helical" evidence="2">
    <location>
        <begin position="288"/>
        <end position="308"/>
    </location>
</feature>
<feature type="transmembrane region" description="Helical" evidence="2">
    <location>
        <begin position="320"/>
        <end position="340"/>
    </location>
</feature>
<feature type="transmembrane region" description="Helical" evidence="2">
    <location>
        <begin position="347"/>
        <end position="367"/>
    </location>
</feature>
<feature type="binding site" description="axial binding residue" evidence="2">
    <location>
        <position position="83"/>
    </location>
    <ligand>
        <name>heme b</name>
        <dbReference type="ChEBI" id="CHEBI:60344"/>
        <label>b562</label>
    </ligand>
    <ligandPart>
        <name>Fe</name>
        <dbReference type="ChEBI" id="CHEBI:18248"/>
    </ligandPart>
</feature>
<feature type="binding site" description="axial binding residue" evidence="2">
    <location>
        <position position="97"/>
    </location>
    <ligand>
        <name>heme b</name>
        <dbReference type="ChEBI" id="CHEBI:60344"/>
        <label>b566</label>
    </ligand>
    <ligandPart>
        <name>Fe</name>
        <dbReference type="ChEBI" id="CHEBI:18248"/>
    </ligandPart>
</feature>
<feature type="binding site" description="axial binding residue" evidence="2">
    <location>
        <position position="182"/>
    </location>
    <ligand>
        <name>heme b</name>
        <dbReference type="ChEBI" id="CHEBI:60344"/>
        <label>b562</label>
    </ligand>
    <ligandPart>
        <name>Fe</name>
        <dbReference type="ChEBI" id="CHEBI:18248"/>
    </ligandPart>
</feature>
<feature type="binding site" description="axial binding residue" evidence="2">
    <location>
        <position position="196"/>
    </location>
    <ligand>
        <name>heme b</name>
        <dbReference type="ChEBI" id="CHEBI:60344"/>
        <label>b566</label>
    </ligand>
    <ligandPart>
        <name>Fe</name>
        <dbReference type="ChEBI" id="CHEBI:18248"/>
    </ligandPart>
</feature>
<feature type="binding site" evidence="2">
    <location>
        <position position="201"/>
    </location>
    <ligand>
        <name>a ubiquinone</name>
        <dbReference type="ChEBI" id="CHEBI:16389"/>
    </ligand>
</feature>
<evidence type="ECO:0000250" key="1"/>
<evidence type="ECO:0000250" key="2">
    <source>
        <dbReference type="UniProtKB" id="P00157"/>
    </source>
</evidence>
<evidence type="ECO:0000255" key="3">
    <source>
        <dbReference type="PROSITE-ProRule" id="PRU00967"/>
    </source>
</evidence>
<evidence type="ECO:0000255" key="4">
    <source>
        <dbReference type="PROSITE-ProRule" id="PRU00968"/>
    </source>
</evidence>
<sequence length="380" mass="42722">MTVIRKTHPLIKIINHSFIDLPAPSNISSWWNFGSLLGLCLAIQILTGLFLAMHYTSDTATAFSSVAHICRDVNYGWLIRYMHANGASMFFICLFLHVGRGIYYGSYNMIETWNMGVILLFAVMATAFMGYVLPWGQMSFWGATVITNLLSAIPYIGTTLVEWIWGGFSVDKATLTRFFAFHFILPFIITALVLVHLLFLHETGSNNPTGLNSDADKIPFHPYYTVKDFLGVLILLMAFMILTLFFPDILGDPDNYTPANPLNTPPHIKPEWYFLFAYAILRSIPNKLGGVLALVLSILILALLPLLHTSKQRALTFRPITQTMYWILVADLLILTWIGGQPVEYPFIIIGQTASIAYFTIILILMPIAGMIENNILNLD</sequence>
<organism>
    <name type="scientific">Microtus felteni</name>
    <name type="common">Felten's vole</name>
    <dbReference type="NCBI Taxonomy" id="269653"/>
    <lineage>
        <taxon>Eukaryota</taxon>
        <taxon>Metazoa</taxon>
        <taxon>Chordata</taxon>
        <taxon>Craniata</taxon>
        <taxon>Vertebrata</taxon>
        <taxon>Euteleostomi</taxon>
        <taxon>Mammalia</taxon>
        <taxon>Eutheria</taxon>
        <taxon>Euarchontoglires</taxon>
        <taxon>Glires</taxon>
        <taxon>Rodentia</taxon>
        <taxon>Myomorpha</taxon>
        <taxon>Muroidea</taxon>
        <taxon>Cricetidae</taxon>
        <taxon>Arvicolinae</taxon>
        <taxon>Microtus</taxon>
    </lineage>
</organism>
<accession>Q6JDT8</accession>